<proteinExistence type="evidence at protein level"/>
<sequence length="503" mass="56032">MLRVDQTGTILIKNGTVVNDDRYFKSDVLVENGIIKEISKNIEPKEGIKVVDATDKLLLPGGIDTHTHFQLPFMGTVSVDDFDIGTQAAVAGGTTFIIDFVIPTRGQSLLEAYDQWKKWADEKVNCDYSLHVAITWWSEQVSREMEILVKERGVNSFKCFMAYKNSFMVTDQEMYHIFKRCKELGAIAQVHAENGDMVFEGQKKMLEMGITGPEGHELSRPEALEAEATNRAIVIADSVCTPVYIVHVQSIGAADVICKHRKEGVRVYGEPIAAGLGVDGSHMWNHDWRHAAAFVMGPPIRPDPRTKGVLMDYLARGDLDCVGTDNCTFCADQKAMGKDDFTKIPNGVNGVEDRMSIVWENGVNTGKLTWCQFVRATSSEAARIFNIYPRKGRIDVGCDGDIVIWDPNQSKTISKDTHHHAVDFNIFEGIKVTGIAVTTIVAGNIVWSDNKLSCVKGSGRFVPRPPFGPVFDGIEQRDKVRNELLRKVDRKPYEDDNTKNSSK</sequence>
<comment type="function">
    <text evidence="2">Catalyzes the second step of the reductive pyrimidine degradation, the reversible hydrolytic ring opening of dihydropyrimidines. Can catalyze the ring opening of 5,6-dihydrouracil to N-carbamyl-alanine and of 5,6-dihydrothymine to N-carbamyl-amino isobutyrate.</text>
</comment>
<comment type="catalytic activity">
    <reaction evidence="2">
        <text>5,6-dihydrouracil + H2O = 3-(carbamoylamino)propanoate + H(+)</text>
        <dbReference type="Rhea" id="RHEA:16121"/>
        <dbReference type="ChEBI" id="CHEBI:11892"/>
        <dbReference type="ChEBI" id="CHEBI:15377"/>
        <dbReference type="ChEBI" id="CHEBI:15378"/>
        <dbReference type="ChEBI" id="CHEBI:15901"/>
        <dbReference type="EC" id="3.5.2.2"/>
    </reaction>
</comment>
<comment type="cofactor">
    <cofactor evidence="3">
        <name>Zn(2+)</name>
        <dbReference type="ChEBI" id="CHEBI:29105"/>
    </cofactor>
    <text evidence="3">Binds 2 Zn(2+) ions per subunit.</text>
</comment>
<comment type="subunit">
    <text evidence="3">Homotetramer.</text>
</comment>
<comment type="PTM">
    <text evidence="3">Carboxylation allows a single lysine to coordinate two zinc ions.</text>
</comment>
<comment type="similarity">
    <text evidence="4">Belongs to the metallo-dependent hydrolases superfamily. Hydantoinase/dihydropyrimidinase family.</text>
</comment>
<dbReference type="EC" id="3.5.2.2" evidence="2"/>
<dbReference type="EMBL" id="AF465757">
    <property type="protein sequence ID" value="AAO33383.1"/>
    <property type="molecule type" value="mRNA"/>
</dbReference>
<dbReference type="EMBL" id="AAFI02000005">
    <property type="protein sequence ID" value="EAL71973.1"/>
    <property type="molecule type" value="Genomic_DNA"/>
</dbReference>
<dbReference type="RefSeq" id="XP_646121.1">
    <property type="nucleotide sequence ID" value="XM_641029.1"/>
</dbReference>
<dbReference type="PDB" id="2FTW">
    <property type="method" value="X-ray"/>
    <property type="resolution" value="2.05 A"/>
    <property type="chains" value="A=1-503"/>
</dbReference>
<dbReference type="PDBsum" id="2FTW"/>
<dbReference type="SMR" id="Q55DL0"/>
<dbReference type="FunCoup" id="Q55DL0">
    <property type="interactions" value="26"/>
</dbReference>
<dbReference type="STRING" id="44689.Q55DL0"/>
<dbReference type="MEROPS" id="M38.973"/>
<dbReference type="PaxDb" id="44689-DDB0191172"/>
<dbReference type="EnsemblProtists" id="EAL71973">
    <property type="protein sequence ID" value="EAL71973"/>
    <property type="gene ID" value="DDB_G0269246"/>
</dbReference>
<dbReference type="GeneID" id="8617070"/>
<dbReference type="KEGG" id="ddi:DDB_G0269246"/>
<dbReference type="dictyBase" id="DDB_G0269246">
    <property type="gene designation" value="pyd2"/>
</dbReference>
<dbReference type="VEuPathDB" id="AmoebaDB:DDB_G0269246"/>
<dbReference type="eggNOG" id="KOG2584">
    <property type="taxonomic scope" value="Eukaryota"/>
</dbReference>
<dbReference type="HOGENOM" id="CLU_015572_2_2_1"/>
<dbReference type="InParanoid" id="Q55DL0"/>
<dbReference type="OMA" id="SAETHHM"/>
<dbReference type="PhylomeDB" id="Q55DL0"/>
<dbReference type="BRENDA" id="3.5.2.2">
    <property type="organism ID" value="1939"/>
</dbReference>
<dbReference type="Reactome" id="R-DDI-73621">
    <property type="pathway name" value="Pyrimidine catabolism"/>
</dbReference>
<dbReference type="EvolutionaryTrace" id="Q55DL0"/>
<dbReference type="PRO" id="PR:Q55DL0"/>
<dbReference type="Proteomes" id="UP000002195">
    <property type="component" value="Chromosome 1"/>
</dbReference>
<dbReference type="GO" id="GO:0005829">
    <property type="term" value="C:cytosol"/>
    <property type="evidence" value="ECO:0000318"/>
    <property type="project" value="GO_Central"/>
</dbReference>
<dbReference type="GO" id="GO:0004157">
    <property type="term" value="F:dihydropyrimidinase activity"/>
    <property type="evidence" value="ECO:0000314"/>
    <property type="project" value="dictyBase"/>
</dbReference>
<dbReference type="GO" id="GO:0008270">
    <property type="term" value="F:zinc ion binding"/>
    <property type="evidence" value="ECO:0000314"/>
    <property type="project" value="dictyBase"/>
</dbReference>
<dbReference type="GO" id="GO:0006208">
    <property type="term" value="P:pyrimidine nucleobase catabolic process"/>
    <property type="evidence" value="ECO:0000314"/>
    <property type="project" value="dictyBase"/>
</dbReference>
<dbReference type="CDD" id="cd01314">
    <property type="entry name" value="D-HYD"/>
    <property type="match status" value="1"/>
</dbReference>
<dbReference type="DisProt" id="DP02958"/>
<dbReference type="FunFam" id="3.20.20.140:FF:000001">
    <property type="entry name" value="Dihydropyrimidinase like 3"/>
    <property type="match status" value="1"/>
</dbReference>
<dbReference type="Gene3D" id="3.20.20.140">
    <property type="entry name" value="Metal-dependent hydrolases"/>
    <property type="match status" value="1"/>
</dbReference>
<dbReference type="Gene3D" id="2.30.40.10">
    <property type="entry name" value="Urease, subunit C, domain 1"/>
    <property type="match status" value="1"/>
</dbReference>
<dbReference type="InterPro" id="IPR006680">
    <property type="entry name" value="Amidohydro-rel"/>
</dbReference>
<dbReference type="InterPro" id="IPR011778">
    <property type="entry name" value="Hydantoinase/dihydroPyrase"/>
</dbReference>
<dbReference type="InterPro" id="IPR011059">
    <property type="entry name" value="Metal-dep_hydrolase_composite"/>
</dbReference>
<dbReference type="InterPro" id="IPR032466">
    <property type="entry name" value="Metal_Hydrolase"/>
</dbReference>
<dbReference type="InterPro" id="IPR050378">
    <property type="entry name" value="Metallo-dep_Hydrolases_sf"/>
</dbReference>
<dbReference type="NCBIfam" id="TIGR02033">
    <property type="entry name" value="D-hydantoinase"/>
    <property type="match status" value="1"/>
</dbReference>
<dbReference type="PANTHER" id="PTHR11647:SF1">
    <property type="entry name" value="COLLAPSIN RESPONSE MEDIATOR PROTEIN"/>
    <property type="match status" value="1"/>
</dbReference>
<dbReference type="PANTHER" id="PTHR11647">
    <property type="entry name" value="HYDRANTOINASE/DIHYDROPYRIMIDINASE FAMILY MEMBER"/>
    <property type="match status" value="1"/>
</dbReference>
<dbReference type="Pfam" id="PF01979">
    <property type="entry name" value="Amidohydro_1"/>
    <property type="match status" value="1"/>
</dbReference>
<dbReference type="SUPFAM" id="SSF51338">
    <property type="entry name" value="Composite domain of metallo-dependent hydrolases"/>
    <property type="match status" value="2"/>
</dbReference>
<dbReference type="SUPFAM" id="SSF51556">
    <property type="entry name" value="Metallo-dependent hydrolases"/>
    <property type="match status" value="1"/>
</dbReference>
<keyword id="KW-0002">3D-structure</keyword>
<keyword id="KW-0378">Hydrolase</keyword>
<keyword id="KW-0479">Metal-binding</keyword>
<keyword id="KW-1185">Reference proteome</keyword>
<keyword id="KW-0862">Zinc</keyword>
<accession>Q55DL0</accession>
<accession>Q86LT2</accession>
<reference key="1">
    <citation type="journal article" date="2003" name="Nucleic Acids Res.">
        <title>Dihydropyrimidine amidohydrolases and dihydroorotases share the same origin and several enzymatic properties.</title>
        <authorList>
            <person name="Gojkovic Z."/>
            <person name="Rislund L."/>
            <person name="Andersen B."/>
            <person name="Sandrini M.P."/>
            <person name="Cook P.F."/>
            <person name="Schnackerz K.D."/>
            <person name="Piskur J."/>
        </authorList>
    </citation>
    <scope>NUCLEOTIDE SEQUENCE [MRNA]</scope>
    <scope>FUNCTION</scope>
    <scope>CATALYTIC ACTIVITY</scope>
</reference>
<reference key="2">
    <citation type="journal article" date="2005" name="Nature">
        <title>The genome of the social amoeba Dictyostelium discoideum.</title>
        <authorList>
            <person name="Eichinger L."/>
            <person name="Pachebat J.A."/>
            <person name="Gloeckner G."/>
            <person name="Rajandream M.A."/>
            <person name="Sucgang R."/>
            <person name="Berriman M."/>
            <person name="Song J."/>
            <person name="Olsen R."/>
            <person name="Szafranski K."/>
            <person name="Xu Q."/>
            <person name="Tunggal B."/>
            <person name="Kummerfeld S."/>
            <person name="Madera M."/>
            <person name="Konfortov B.A."/>
            <person name="Rivero F."/>
            <person name="Bankier A.T."/>
            <person name="Lehmann R."/>
            <person name="Hamlin N."/>
            <person name="Davies R."/>
            <person name="Gaudet P."/>
            <person name="Fey P."/>
            <person name="Pilcher K."/>
            <person name="Chen G."/>
            <person name="Saunders D."/>
            <person name="Sodergren E.J."/>
            <person name="Davis P."/>
            <person name="Kerhornou A."/>
            <person name="Nie X."/>
            <person name="Hall N."/>
            <person name="Anjard C."/>
            <person name="Hemphill L."/>
            <person name="Bason N."/>
            <person name="Farbrother P."/>
            <person name="Desany B."/>
            <person name="Just E."/>
            <person name="Morio T."/>
            <person name="Rost R."/>
            <person name="Churcher C.M."/>
            <person name="Cooper J."/>
            <person name="Haydock S."/>
            <person name="van Driessche N."/>
            <person name="Cronin A."/>
            <person name="Goodhead I."/>
            <person name="Muzny D.M."/>
            <person name="Mourier T."/>
            <person name="Pain A."/>
            <person name="Lu M."/>
            <person name="Harper D."/>
            <person name="Lindsay R."/>
            <person name="Hauser H."/>
            <person name="James K.D."/>
            <person name="Quiles M."/>
            <person name="Madan Babu M."/>
            <person name="Saito T."/>
            <person name="Buchrieser C."/>
            <person name="Wardroper A."/>
            <person name="Felder M."/>
            <person name="Thangavelu M."/>
            <person name="Johnson D."/>
            <person name="Knights A."/>
            <person name="Loulseged H."/>
            <person name="Mungall K.L."/>
            <person name="Oliver K."/>
            <person name="Price C."/>
            <person name="Quail M.A."/>
            <person name="Urushihara H."/>
            <person name="Hernandez J."/>
            <person name="Rabbinowitsch E."/>
            <person name="Steffen D."/>
            <person name="Sanders M."/>
            <person name="Ma J."/>
            <person name="Kohara Y."/>
            <person name="Sharp S."/>
            <person name="Simmonds M.N."/>
            <person name="Spiegler S."/>
            <person name="Tivey A."/>
            <person name="Sugano S."/>
            <person name="White B."/>
            <person name="Walker D."/>
            <person name="Woodward J.R."/>
            <person name="Winckler T."/>
            <person name="Tanaka Y."/>
            <person name="Shaulsky G."/>
            <person name="Schleicher M."/>
            <person name="Weinstock G.M."/>
            <person name="Rosenthal A."/>
            <person name="Cox E.C."/>
            <person name="Chisholm R.L."/>
            <person name="Gibbs R.A."/>
            <person name="Loomis W.F."/>
            <person name="Platzer M."/>
            <person name="Kay R.R."/>
            <person name="Williams J.G."/>
            <person name="Dear P.H."/>
            <person name="Noegel A.A."/>
            <person name="Barrell B.G."/>
            <person name="Kuspa A."/>
        </authorList>
    </citation>
    <scope>NUCLEOTIDE SEQUENCE [LARGE SCALE GENOMIC DNA]</scope>
    <source>
        <strain>AX4</strain>
    </source>
</reference>
<reference key="3">
    <citation type="journal article" date="2006" name="J. Biol. Chem.">
        <title>The crystal structures of dihydropyrimidinases reaffirm the close relationship between cyclic amidohydrolases and explain their substrate specificity.</title>
        <authorList>
            <person name="Lohkamp B."/>
            <person name="Andersen B."/>
            <person name="Piskur J."/>
            <person name="Dobritzsch D."/>
        </authorList>
    </citation>
    <scope>X-RAY CRYSTALLOGRAPHY (2.05 ANGSTROMS) IN COMPLEX WITH ZINC IONS</scope>
    <scope>CARBOXYLATION AT LYS-158</scope>
    <scope>SUBUNIT</scope>
</reference>
<organism>
    <name type="scientific">Dictyostelium discoideum</name>
    <name type="common">Social amoeba</name>
    <dbReference type="NCBI Taxonomy" id="44689"/>
    <lineage>
        <taxon>Eukaryota</taxon>
        <taxon>Amoebozoa</taxon>
        <taxon>Evosea</taxon>
        <taxon>Eumycetozoa</taxon>
        <taxon>Dictyostelia</taxon>
        <taxon>Dictyosteliales</taxon>
        <taxon>Dictyosteliaceae</taxon>
        <taxon>Dictyostelium</taxon>
    </lineage>
</organism>
<evidence type="ECO:0000250" key="1">
    <source>
        <dbReference type="UniProtKB" id="Q9P903"/>
    </source>
</evidence>
<evidence type="ECO:0000269" key="2">
    <source>
    </source>
</evidence>
<evidence type="ECO:0000269" key="3">
    <source>
    </source>
</evidence>
<evidence type="ECO:0000305" key="4"/>
<evidence type="ECO:0007744" key="5">
    <source>
        <dbReference type="PDB" id="2FTW"/>
    </source>
</evidence>
<evidence type="ECO:0007829" key="6">
    <source>
        <dbReference type="PDB" id="2FTW"/>
    </source>
</evidence>
<name>DPYS_DICDI</name>
<feature type="chain" id="PRO_0000312734" description="Dihydropyrimidinase">
    <location>
        <begin position="1"/>
        <end position="503"/>
    </location>
</feature>
<feature type="binding site" evidence="3 5">
    <location>
        <position position="66"/>
    </location>
    <ligand>
        <name>Zn(2+)</name>
        <dbReference type="ChEBI" id="CHEBI:29105"/>
        <label>1</label>
    </ligand>
</feature>
<feature type="binding site" evidence="3 5">
    <location>
        <position position="68"/>
    </location>
    <ligand>
        <name>Zn(2+)</name>
        <dbReference type="ChEBI" id="CHEBI:29105"/>
        <label>1</label>
    </ligand>
</feature>
<feature type="binding site" description="via carbamate group" evidence="3 5">
    <location>
        <position position="158"/>
    </location>
    <ligand>
        <name>Zn(2+)</name>
        <dbReference type="ChEBI" id="CHEBI:29105"/>
        <label>1</label>
    </ligand>
</feature>
<feature type="binding site" description="via carbamate group" evidence="3 5">
    <location>
        <position position="158"/>
    </location>
    <ligand>
        <name>Zn(2+)</name>
        <dbReference type="ChEBI" id="CHEBI:29105"/>
        <label>2</label>
    </ligand>
</feature>
<feature type="binding site" evidence="1">
    <location>
        <position position="163"/>
    </location>
    <ligand>
        <name>substrate</name>
    </ligand>
</feature>
<feature type="binding site" evidence="3 5">
    <location>
        <position position="191"/>
    </location>
    <ligand>
        <name>Zn(2+)</name>
        <dbReference type="ChEBI" id="CHEBI:29105"/>
        <label>2</label>
    </ligand>
</feature>
<feature type="binding site" evidence="3 5">
    <location>
        <position position="247"/>
    </location>
    <ligand>
        <name>Zn(2+)</name>
        <dbReference type="ChEBI" id="CHEBI:29105"/>
        <label>2</label>
    </ligand>
</feature>
<feature type="binding site" evidence="3 5">
    <location>
        <position position="325"/>
    </location>
    <ligand>
        <name>Zn(2+)</name>
        <dbReference type="ChEBI" id="CHEBI:29105"/>
        <label>1</label>
    </ligand>
</feature>
<feature type="binding site" evidence="1">
    <location>
        <position position="346"/>
    </location>
    <ligand>
        <name>substrate</name>
    </ligand>
</feature>
<feature type="modified residue" description="N6-carboxylysine" evidence="3 5">
    <location>
        <position position="158"/>
    </location>
</feature>
<feature type="sequence conflict" description="In Ref. 1; AAO33383." evidence="4" ref="1">
    <original>A</original>
    <variation>R</variation>
    <location>
        <position position="381"/>
    </location>
</feature>
<feature type="strand" evidence="6">
    <location>
        <begin position="10"/>
        <end position="14"/>
    </location>
</feature>
<feature type="strand" evidence="6">
    <location>
        <begin position="16"/>
        <end position="18"/>
    </location>
</feature>
<feature type="strand" evidence="6">
    <location>
        <begin position="23"/>
        <end position="25"/>
    </location>
</feature>
<feature type="strand" evidence="6">
    <location>
        <begin position="27"/>
        <end position="31"/>
    </location>
</feature>
<feature type="strand" evidence="6">
    <location>
        <begin position="34"/>
        <end position="40"/>
    </location>
</feature>
<feature type="strand" evidence="6">
    <location>
        <begin position="50"/>
        <end position="52"/>
    </location>
</feature>
<feature type="strand" evidence="6">
    <location>
        <begin position="57"/>
        <end position="60"/>
    </location>
</feature>
<feature type="strand" evidence="6">
    <location>
        <begin position="62"/>
        <end position="67"/>
    </location>
</feature>
<feature type="helix" evidence="6">
    <location>
        <begin position="82"/>
        <end position="91"/>
    </location>
</feature>
<feature type="strand" evidence="6">
    <location>
        <begin position="94"/>
        <end position="101"/>
    </location>
</feature>
<feature type="helix" evidence="6">
    <location>
        <begin position="109"/>
        <end position="121"/>
    </location>
</feature>
<feature type="strand" evidence="6">
    <location>
        <begin position="125"/>
        <end position="133"/>
    </location>
</feature>
<feature type="helix" evidence="6">
    <location>
        <begin position="139"/>
        <end position="151"/>
    </location>
</feature>
<feature type="strand" evidence="6">
    <location>
        <begin position="156"/>
        <end position="162"/>
    </location>
</feature>
<feature type="turn" evidence="6">
    <location>
        <begin position="164"/>
        <end position="167"/>
    </location>
</feature>
<feature type="helix" evidence="6">
    <location>
        <begin position="171"/>
        <end position="184"/>
    </location>
</feature>
<feature type="strand" evidence="6">
    <location>
        <begin position="187"/>
        <end position="191"/>
    </location>
</feature>
<feature type="helix" evidence="6">
    <location>
        <begin position="195"/>
        <end position="207"/>
    </location>
</feature>
<feature type="helix" evidence="6">
    <location>
        <begin position="214"/>
        <end position="219"/>
    </location>
</feature>
<feature type="helix" evidence="6">
    <location>
        <begin position="223"/>
        <end position="239"/>
    </location>
</feature>
<feature type="strand" evidence="6">
    <location>
        <begin position="243"/>
        <end position="245"/>
    </location>
</feature>
<feature type="helix" evidence="6">
    <location>
        <begin position="251"/>
        <end position="262"/>
    </location>
</feature>
<feature type="strand" evidence="6">
    <location>
        <begin position="267"/>
        <end position="269"/>
    </location>
</feature>
<feature type="helix" evidence="6">
    <location>
        <begin position="273"/>
        <end position="277"/>
    </location>
</feature>
<feature type="helix" evidence="6">
    <location>
        <begin position="280"/>
        <end position="284"/>
    </location>
</feature>
<feature type="helix" evidence="6">
    <location>
        <begin position="288"/>
        <end position="292"/>
    </location>
</feature>
<feature type="helix" evidence="6">
    <location>
        <begin position="306"/>
        <end position="315"/>
    </location>
</feature>
<feature type="helix" evidence="6">
    <location>
        <begin position="331"/>
        <end position="334"/>
    </location>
</feature>
<feature type="helix" evidence="6">
    <location>
        <begin position="335"/>
        <end position="337"/>
    </location>
</feature>
<feature type="helix" evidence="6">
    <location>
        <begin position="341"/>
        <end position="343"/>
    </location>
</feature>
<feature type="turn" evidence="6">
    <location>
        <begin position="351"/>
        <end position="353"/>
    </location>
</feature>
<feature type="helix" evidence="6">
    <location>
        <begin position="354"/>
        <end position="362"/>
    </location>
</feature>
<feature type="turn" evidence="6">
    <location>
        <begin position="363"/>
        <end position="366"/>
    </location>
</feature>
<feature type="helix" evidence="6">
    <location>
        <begin position="370"/>
        <end position="377"/>
    </location>
</feature>
<feature type="helix" evidence="6">
    <location>
        <begin position="379"/>
        <end position="384"/>
    </location>
</feature>
<feature type="turn" evidence="6">
    <location>
        <begin position="388"/>
        <end position="390"/>
    </location>
</feature>
<feature type="strand" evidence="6">
    <location>
        <begin position="402"/>
        <end position="412"/>
    </location>
</feature>
<feature type="turn" evidence="6">
    <location>
        <begin position="415"/>
        <end position="417"/>
    </location>
</feature>
<feature type="strand" evidence="6">
    <location>
        <begin position="421"/>
        <end position="423"/>
    </location>
</feature>
<feature type="turn" evidence="6">
    <location>
        <begin position="426"/>
        <end position="429"/>
    </location>
</feature>
<feature type="strand" evidence="6">
    <location>
        <begin position="431"/>
        <end position="441"/>
    </location>
</feature>
<feature type="strand" evidence="6">
    <location>
        <begin position="444"/>
        <end position="448"/>
    </location>
</feature>
<feature type="helix" evidence="6">
    <location>
        <begin position="469"/>
        <end position="471"/>
    </location>
</feature>
<feature type="helix" evidence="6">
    <location>
        <begin position="474"/>
        <end position="481"/>
    </location>
</feature>
<feature type="helix" evidence="6">
    <location>
        <begin position="483"/>
        <end position="486"/>
    </location>
</feature>
<gene>
    <name type="primary">pyd2</name>
    <name type="ORF">DDB_G0269246</name>
</gene>
<protein>
    <recommendedName>
        <fullName>Dihydropyrimidinase</fullName>
        <shortName>DHP</shortName>
        <shortName>DHPase</shortName>
        <ecNumber evidence="2">3.5.2.2</ecNumber>
    </recommendedName>
    <alternativeName>
        <fullName>Dihydropyrimidine amidohydrolase</fullName>
    </alternativeName>
    <alternativeName>
        <fullName>Hydantoinase</fullName>
    </alternativeName>
</protein>